<protein>
    <recommendedName>
        <fullName>Probable methylmalonyl-CoA mutase, mitochondrial</fullName>
        <ecNumber>5.4.99.2</ecNumber>
    </recommendedName>
    <alternativeName>
        <fullName>MethylmalonylCoA mutase homolog 1</fullName>
        <shortName>MCM</shortName>
    </alternativeName>
</protein>
<name>MUTA_CAEEL</name>
<proteinExistence type="inferred from homology"/>
<dbReference type="EC" id="5.4.99.2"/>
<dbReference type="EMBL" id="Z35604">
    <property type="protein sequence ID" value="CAA84676.2"/>
    <property type="molecule type" value="Genomic_DNA"/>
</dbReference>
<dbReference type="PIR" id="T27674">
    <property type="entry name" value="T27674"/>
</dbReference>
<dbReference type="RefSeq" id="NP_497786.2">
    <property type="nucleotide sequence ID" value="NM_065385.6"/>
</dbReference>
<dbReference type="SMR" id="Q23381"/>
<dbReference type="BioGRID" id="40741">
    <property type="interactions" value="4"/>
</dbReference>
<dbReference type="FunCoup" id="Q23381">
    <property type="interactions" value="1183"/>
</dbReference>
<dbReference type="STRING" id="6239.ZK1058.1.1"/>
<dbReference type="PaxDb" id="6239-ZK1058.1"/>
<dbReference type="PeptideAtlas" id="Q23381"/>
<dbReference type="EnsemblMetazoa" id="ZK1058.1.1">
    <property type="protein sequence ID" value="ZK1058.1.1"/>
    <property type="gene ID" value="WBGene00014202"/>
</dbReference>
<dbReference type="GeneID" id="175503"/>
<dbReference type="KEGG" id="cel:CELE_ZK1058.1"/>
<dbReference type="UCSC" id="ZK1058.1.1">
    <property type="organism name" value="c. elegans"/>
</dbReference>
<dbReference type="AGR" id="WB:WBGene00014202"/>
<dbReference type="CTD" id="175503"/>
<dbReference type="WormBase" id="ZK1058.1">
    <property type="protein sequence ID" value="CE30404"/>
    <property type="gene ID" value="WBGene00014202"/>
    <property type="gene designation" value="mmcm-1"/>
</dbReference>
<dbReference type="eggNOG" id="ENOG502QQ7X">
    <property type="taxonomic scope" value="Eukaryota"/>
</dbReference>
<dbReference type="GeneTree" id="ENSGT00390000011892"/>
<dbReference type="HOGENOM" id="CLU_009523_3_1_1"/>
<dbReference type="InParanoid" id="Q23381"/>
<dbReference type="OMA" id="IQEETHI"/>
<dbReference type="OrthoDB" id="198977at2759"/>
<dbReference type="PhylomeDB" id="Q23381"/>
<dbReference type="BRENDA" id="5.4.99.2">
    <property type="organism ID" value="1045"/>
</dbReference>
<dbReference type="Reactome" id="R-CEL-71032">
    <property type="pathway name" value="Propionyl-CoA catabolism"/>
</dbReference>
<dbReference type="Reactome" id="R-CEL-9759218">
    <property type="pathway name" value="Cobalamin (Cbl) metabolism"/>
</dbReference>
<dbReference type="PRO" id="PR:Q23381"/>
<dbReference type="Proteomes" id="UP000001940">
    <property type="component" value="Chromosome III"/>
</dbReference>
<dbReference type="Bgee" id="WBGene00014202">
    <property type="expression patterns" value="Expressed in larva and 4 other cell types or tissues"/>
</dbReference>
<dbReference type="GO" id="GO:0005737">
    <property type="term" value="C:cytoplasm"/>
    <property type="evidence" value="ECO:0000318"/>
    <property type="project" value="GO_Central"/>
</dbReference>
<dbReference type="GO" id="GO:0005759">
    <property type="term" value="C:mitochondrial matrix"/>
    <property type="evidence" value="ECO:0007669"/>
    <property type="project" value="UniProtKB-SubCell"/>
</dbReference>
<dbReference type="GO" id="GO:0005739">
    <property type="term" value="C:mitochondrion"/>
    <property type="evidence" value="ECO:0000314"/>
    <property type="project" value="WormBase"/>
</dbReference>
<dbReference type="GO" id="GO:0031419">
    <property type="term" value="F:cobalamin binding"/>
    <property type="evidence" value="ECO:0000318"/>
    <property type="project" value="GO_Central"/>
</dbReference>
<dbReference type="GO" id="GO:0046872">
    <property type="term" value="F:metal ion binding"/>
    <property type="evidence" value="ECO:0007669"/>
    <property type="project" value="UniProtKB-KW"/>
</dbReference>
<dbReference type="GO" id="GO:0004494">
    <property type="term" value="F:methylmalonyl-CoA mutase activity"/>
    <property type="evidence" value="ECO:0000315"/>
    <property type="project" value="WormBase"/>
</dbReference>
<dbReference type="GO" id="GO:0006520">
    <property type="term" value="P:amino acid metabolic process"/>
    <property type="evidence" value="ECO:0000315"/>
    <property type="project" value="WormBase"/>
</dbReference>
<dbReference type="GO" id="GO:0006631">
    <property type="term" value="P:fatty acid metabolic process"/>
    <property type="evidence" value="ECO:0000315"/>
    <property type="project" value="WormBase"/>
</dbReference>
<dbReference type="GO" id="GO:0019678">
    <property type="term" value="P:propionate metabolic process, methylmalonyl pathway"/>
    <property type="evidence" value="ECO:0000318"/>
    <property type="project" value="GO_Central"/>
</dbReference>
<dbReference type="CDD" id="cd02071">
    <property type="entry name" value="MM_CoA_mut_B12_BD"/>
    <property type="match status" value="1"/>
</dbReference>
<dbReference type="CDD" id="cd03679">
    <property type="entry name" value="MM_CoA_mutase_alpha_like"/>
    <property type="match status" value="1"/>
</dbReference>
<dbReference type="FunFam" id="3.20.20.240:FF:000002">
    <property type="entry name" value="Methylmalonyl-CoA mutase, mitochondrial"/>
    <property type="match status" value="1"/>
</dbReference>
<dbReference type="FunFam" id="3.40.50.280:FF:000002">
    <property type="entry name" value="Methylmalonyl-CoA mutase, mitochondrial"/>
    <property type="match status" value="1"/>
</dbReference>
<dbReference type="Gene3D" id="3.40.50.280">
    <property type="entry name" value="Cobalamin-binding domain"/>
    <property type="match status" value="1"/>
</dbReference>
<dbReference type="Gene3D" id="3.20.20.240">
    <property type="entry name" value="Methylmalonyl-CoA mutase"/>
    <property type="match status" value="1"/>
</dbReference>
<dbReference type="InterPro" id="IPR006159">
    <property type="entry name" value="Acid_CoA_mut_C"/>
</dbReference>
<dbReference type="InterPro" id="IPR016176">
    <property type="entry name" value="Cbl-dep_enz_cat"/>
</dbReference>
<dbReference type="InterPro" id="IPR006158">
    <property type="entry name" value="Cobalamin-bd"/>
</dbReference>
<dbReference type="InterPro" id="IPR036724">
    <property type="entry name" value="Cobalamin-bd_sf"/>
</dbReference>
<dbReference type="InterPro" id="IPR006099">
    <property type="entry name" value="MeMalonylCoA_mutase_a/b_cat"/>
</dbReference>
<dbReference type="InterPro" id="IPR006098">
    <property type="entry name" value="MMCoA_mutase_a_cat"/>
</dbReference>
<dbReference type="NCBIfam" id="TIGR00640">
    <property type="entry name" value="acid_CoA_mut_C"/>
    <property type="match status" value="1"/>
</dbReference>
<dbReference type="NCBIfam" id="TIGR00641">
    <property type="entry name" value="acid_CoA_mut_N"/>
    <property type="match status" value="1"/>
</dbReference>
<dbReference type="NCBIfam" id="NF006944">
    <property type="entry name" value="PRK09426.1"/>
    <property type="match status" value="1"/>
</dbReference>
<dbReference type="PANTHER" id="PTHR48101:SF4">
    <property type="entry name" value="METHYLMALONYL-COA MUTASE, MITOCHONDRIAL"/>
    <property type="match status" value="1"/>
</dbReference>
<dbReference type="PANTHER" id="PTHR48101">
    <property type="entry name" value="METHYLMALONYL-COA MUTASE, MITOCHONDRIAL-RELATED"/>
    <property type="match status" value="1"/>
</dbReference>
<dbReference type="Pfam" id="PF02310">
    <property type="entry name" value="B12-binding"/>
    <property type="match status" value="1"/>
</dbReference>
<dbReference type="Pfam" id="PF01642">
    <property type="entry name" value="MM_CoA_mutase"/>
    <property type="match status" value="1"/>
</dbReference>
<dbReference type="SUPFAM" id="SSF52242">
    <property type="entry name" value="Cobalamin (vitamin B12)-binding domain"/>
    <property type="match status" value="1"/>
</dbReference>
<dbReference type="SUPFAM" id="SSF51703">
    <property type="entry name" value="Cobalamin (vitamin B12)-dependent enzymes"/>
    <property type="match status" value="1"/>
</dbReference>
<dbReference type="PROSITE" id="PS51332">
    <property type="entry name" value="B12_BINDING"/>
    <property type="match status" value="1"/>
</dbReference>
<dbReference type="PROSITE" id="PS00544">
    <property type="entry name" value="METMALONYL_COA_MUTASE"/>
    <property type="match status" value="1"/>
</dbReference>
<sequence length="744" mass="81683">MYLQLLKPTLLRCSTRPSSSGAYTRSPIDQKWAAMAKKAMKGREADTLTWNTPEGIPIKPLYLRSDRDCDAQRSVELPGQFPFTRGPYPTMYTQRPWTIRQYAGFSTVEESNKFYKENIKAGQQGLSVAFDLATHRGYDSDNPRVFGDVGMAGVAVDSVEDMRQLFDGINLEKMSVSMTMNGAVVPVLAMYVVAAEEAGVSRKLLAGTIQNDILKEFMVRNTYIYPPEPSMRIIGDIFAYTSREMPKFNSISISGYHMQEAGADAVLEMAFTIADGIQYCETGLNAGLTIDAFAPRLSFFWGISMNFYMEIAKMRAARRLWANLIKERFSPKSDKSMMLRTHSQTSGWSLTEQDPYNNIIRTTIEAMASVFGGTQSLHTNSFDEALGLPTKFSARIARNTQIIIQEESGICNVADPWGGSYMMESLTDEIYEKALAVIKEIDELGGMAKAVASGMTKLKIEEAAAKKQARIDAGKDVIVGVNKYRLDHEQQVEVLKIDNAKVREEQCAKLNHIRATRDAEKAQKALDAITEGARGNGNLMELAIEAARARCTVGEISDAMEKVFNRHAAVNRLVSGAYKSEFGETSEMSQVLERVKSFADRDGRQPRIMVAKMGQDGHDRGAKVIATGFADLGFDVDVGPLFQTPLEAAQQAVDADVHVIGASSLAAGHLTLIPQLIGELKKLGRPDILVVAGGVIPPQDYKELYDAGVALVFGPGTRLPACANQILEKLEANLPEAPGKAASR</sequence>
<feature type="transit peptide" description="Mitochondrion" evidence="2">
    <location>
        <begin position="1"/>
        <end status="unknown"/>
    </location>
</feature>
<feature type="chain" id="PRO_0000019297" description="Probable methylmalonyl-CoA mutase, mitochondrial">
    <location>
        <begin status="unknown"/>
        <end position="744"/>
    </location>
</feature>
<feature type="domain" description="B12-binding" evidence="3">
    <location>
        <begin position="605"/>
        <end position="737"/>
    </location>
</feature>
<feature type="binding site" description="axial binding residue" evidence="1">
    <location>
        <position position="618"/>
    </location>
    <ligand>
        <name>adenosylcob(III)alamin</name>
        <dbReference type="ChEBI" id="CHEBI:18408"/>
    </ligand>
    <ligandPart>
        <name>Co</name>
        <dbReference type="ChEBI" id="CHEBI:27638"/>
    </ligandPart>
</feature>
<evidence type="ECO:0000250" key="1"/>
<evidence type="ECO:0000255" key="2"/>
<evidence type="ECO:0000255" key="3">
    <source>
        <dbReference type="PROSITE-ProRule" id="PRU00666"/>
    </source>
</evidence>
<evidence type="ECO:0000305" key="4"/>
<organism>
    <name type="scientific">Caenorhabditis elegans</name>
    <dbReference type="NCBI Taxonomy" id="6239"/>
    <lineage>
        <taxon>Eukaryota</taxon>
        <taxon>Metazoa</taxon>
        <taxon>Ecdysozoa</taxon>
        <taxon>Nematoda</taxon>
        <taxon>Chromadorea</taxon>
        <taxon>Rhabditida</taxon>
        <taxon>Rhabditina</taxon>
        <taxon>Rhabditomorpha</taxon>
        <taxon>Rhabditoidea</taxon>
        <taxon>Rhabditidae</taxon>
        <taxon>Peloderinae</taxon>
        <taxon>Caenorhabditis</taxon>
    </lineage>
</organism>
<gene>
    <name type="primary">mmcm-1</name>
    <name type="ORF">ZK1058.1</name>
</gene>
<comment type="function">
    <text evidence="1">Involved, in man, in the degradation of several amino acids, odd-chain fatty acids and cholesterol via propionyl-CoA to the tricarboxylic acid cycle. MCM has different functions in other species (By similarity).</text>
</comment>
<comment type="catalytic activity">
    <reaction>
        <text>(R)-methylmalonyl-CoA = succinyl-CoA</text>
        <dbReference type="Rhea" id="RHEA:22888"/>
        <dbReference type="ChEBI" id="CHEBI:57292"/>
        <dbReference type="ChEBI" id="CHEBI:57326"/>
        <dbReference type="EC" id="5.4.99.2"/>
    </reaction>
</comment>
<comment type="cofactor">
    <cofactor evidence="1">
        <name>adenosylcob(III)alamin</name>
        <dbReference type="ChEBI" id="CHEBI:18408"/>
    </cofactor>
</comment>
<comment type="subunit">
    <text evidence="1">Homodimer.</text>
</comment>
<comment type="subcellular location">
    <subcellularLocation>
        <location evidence="1">Mitochondrion matrix</location>
    </subcellularLocation>
</comment>
<comment type="similarity">
    <text evidence="4">Belongs to the methylmalonyl-CoA mutase family.</text>
</comment>
<reference key="1">
    <citation type="journal article" date="1998" name="Science">
        <title>Genome sequence of the nematode C. elegans: a platform for investigating biology.</title>
        <authorList>
            <consortium name="The C. elegans sequencing consortium"/>
        </authorList>
    </citation>
    <scope>NUCLEOTIDE SEQUENCE [LARGE SCALE GENOMIC DNA]</scope>
    <source>
        <strain>Bristol N2</strain>
    </source>
</reference>
<accession>Q23381</accession>
<keyword id="KW-0846">Cobalamin</keyword>
<keyword id="KW-0170">Cobalt</keyword>
<keyword id="KW-0413">Isomerase</keyword>
<keyword id="KW-0479">Metal-binding</keyword>
<keyword id="KW-0496">Mitochondrion</keyword>
<keyword id="KW-1185">Reference proteome</keyword>
<keyword id="KW-0809">Transit peptide</keyword>